<sequence>MKIINLGILAHVDAGKTTLTESLLYTSGAIAEPGSVDKGTTRTDTINLERQRGITIQTAVTSFQWEDVKVNIIDTPGHMDFLAEVYRSLSVLDGAVLLVSAKDGIQAQTRILFHALQIMKIPTIFFINKIDQEGIDLPMVYQEMKAKLSSEIIVKQKVGQHPHINVTDNDDMEQWDAVIMGNDELLEKYMSGKPFKMSELEQEENRRFQNGTLFPVYHGSAKNNLGIRQLIEVIASKFYSSTPEGQSELCGQVFKIEYSEKRRRFVYVRIYSGTLHLRDVIRISEKEKIKITEMCVPTNGELYSSDTACSGDIVILPNDVLQLNSILGNEILLPQRKFIENPLPMLQTTIAVKKSEQREILLGALTEISDGDPLLKYYVDTTTHEIILSFLGNVQMEVICAILEEKYHVEAEIKEPTVIYMERPLRKAEYTIHIEVPPNPFWASVGLSIEPLLLGSGVQYESRVSLGYLNQSFQNAVMEGVLYGCEQGLYGWKVTDCKICFEYGLYYSPVSTPADFRLLSPIVLEQALKKAGTELLEPYLHFEIYAPQEYLSRAYHDAPRYCADIVSTQIKNDEVILKGEIPARCIQEYRNDLTNFTNGQGVCLTELKGYQPAIGKFICQPRRPNSRIDKVRHMFHKLA</sequence>
<gene>
    <name type="primary">tetO</name>
    <name type="synonym">tet(O)</name>
</gene>
<reference key="1">
    <citation type="journal article" date="1987" name="FEMS Microbiol. Lett.">
        <title>Nucleotide sequence and distribution of gene tetO encoding tetracycline resistance in Campylobacter coli.</title>
        <authorList>
            <person name="Sougakoff W."/>
            <person name="Papadopoulou B."/>
            <person name="Nordmann P."/>
            <person name="Courvalin P."/>
        </authorList>
    </citation>
    <scope>NUCLEOTIDE SEQUENCE [GENOMIC DNA]</scope>
</reference>
<comment type="function">
    <text>Abolishes the inhibitory effect of tetracyclin on protein synthesis by a non-covalent modification of the ribosomes.</text>
</comment>
<comment type="similarity">
    <text evidence="2">Belongs to the TRAFAC class translation factor GTPase superfamily. Classic translation factor GTPase family. TetM/TetO subfamily.</text>
</comment>
<dbReference type="PIR" id="S06388">
    <property type="entry name" value="S06388"/>
</dbReference>
<dbReference type="SMR" id="P23835"/>
<dbReference type="GO" id="GO:0005525">
    <property type="term" value="F:GTP binding"/>
    <property type="evidence" value="ECO:0007669"/>
    <property type="project" value="UniProtKB-KW"/>
</dbReference>
<dbReference type="GO" id="GO:0003924">
    <property type="term" value="F:GTPase activity"/>
    <property type="evidence" value="ECO:0007669"/>
    <property type="project" value="InterPro"/>
</dbReference>
<dbReference type="GO" id="GO:0046677">
    <property type="term" value="P:response to antibiotic"/>
    <property type="evidence" value="ECO:0007669"/>
    <property type="project" value="UniProtKB-KW"/>
</dbReference>
<dbReference type="GO" id="GO:0032790">
    <property type="term" value="P:ribosome disassembly"/>
    <property type="evidence" value="ECO:0007669"/>
    <property type="project" value="TreeGrafter"/>
</dbReference>
<dbReference type="GO" id="GO:0006412">
    <property type="term" value="P:translation"/>
    <property type="evidence" value="ECO:0007669"/>
    <property type="project" value="UniProtKB-KW"/>
</dbReference>
<dbReference type="CDD" id="cd03711">
    <property type="entry name" value="Tet_C"/>
    <property type="match status" value="1"/>
</dbReference>
<dbReference type="CDD" id="cd03690">
    <property type="entry name" value="Tet_II"/>
    <property type="match status" value="1"/>
</dbReference>
<dbReference type="CDD" id="cd16258">
    <property type="entry name" value="Tet_III"/>
    <property type="match status" value="1"/>
</dbReference>
<dbReference type="CDD" id="cd01684">
    <property type="entry name" value="Tet_like_IV"/>
    <property type="match status" value="1"/>
</dbReference>
<dbReference type="CDD" id="cd04168">
    <property type="entry name" value="TetM_like"/>
    <property type="match status" value="1"/>
</dbReference>
<dbReference type="Gene3D" id="3.30.230.10">
    <property type="match status" value="1"/>
</dbReference>
<dbReference type="Gene3D" id="3.30.70.240">
    <property type="match status" value="1"/>
</dbReference>
<dbReference type="Gene3D" id="3.30.70.870">
    <property type="entry name" value="Elongation Factor G (Translational Gtpase), domain 3"/>
    <property type="match status" value="1"/>
</dbReference>
<dbReference type="Gene3D" id="3.40.50.300">
    <property type="entry name" value="P-loop containing nucleotide triphosphate hydrolases"/>
    <property type="match status" value="1"/>
</dbReference>
<dbReference type="Gene3D" id="2.40.30.10">
    <property type="entry name" value="Translation factors"/>
    <property type="match status" value="1"/>
</dbReference>
<dbReference type="InterPro" id="IPR053905">
    <property type="entry name" value="EF-G-like_DII"/>
</dbReference>
<dbReference type="InterPro" id="IPR041095">
    <property type="entry name" value="EFG_II"/>
</dbReference>
<dbReference type="InterPro" id="IPR035647">
    <property type="entry name" value="EFG_III/V"/>
</dbReference>
<dbReference type="InterPro" id="IPR000640">
    <property type="entry name" value="EFG_V-like"/>
</dbReference>
<dbReference type="InterPro" id="IPR031157">
    <property type="entry name" value="G_TR_CS"/>
</dbReference>
<dbReference type="InterPro" id="IPR027417">
    <property type="entry name" value="P-loop_NTPase"/>
</dbReference>
<dbReference type="InterPro" id="IPR020568">
    <property type="entry name" value="Ribosomal_Su5_D2-typ_SF"/>
</dbReference>
<dbReference type="InterPro" id="IPR014721">
    <property type="entry name" value="Ribsml_uS5_D2-typ_fold_subgr"/>
</dbReference>
<dbReference type="InterPro" id="IPR005225">
    <property type="entry name" value="Small_GTP-bd"/>
</dbReference>
<dbReference type="InterPro" id="IPR000795">
    <property type="entry name" value="T_Tr_GTP-bd_dom"/>
</dbReference>
<dbReference type="InterPro" id="IPR035650">
    <property type="entry name" value="Tet_C"/>
</dbReference>
<dbReference type="InterPro" id="IPR009000">
    <property type="entry name" value="Transl_B-barrel_sf"/>
</dbReference>
<dbReference type="InterPro" id="IPR005517">
    <property type="entry name" value="Transl_elong_EFG/EF2_IV"/>
</dbReference>
<dbReference type="NCBIfam" id="TIGR00231">
    <property type="entry name" value="small_GTP"/>
    <property type="match status" value="1"/>
</dbReference>
<dbReference type="NCBIfam" id="NF012153">
    <property type="entry name" value="tet_protect"/>
    <property type="match status" value="1"/>
</dbReference>
<dbReference type="NCBIfam" id="NF033148">
    <property type="entry name" value="tet_protect_M_W"/>
    <property type="match status" value="1"/>
</dbReference>
<dbReference type="PANTHER" id="PTHR43261:SF1">
    <property type="entry name" value="RIBOSOME-RELEASING FACTOR 2, MITOCHONDRIAL"/>
    <property type="match status" value="1"/>
</dbReference>
<dbReference type="PANTHER" id="PTHR43261">
    <property type="entry name" value="TRANSLATION ELONGATION FACTOR G-RELATED"/>
    <property type="match status" value="1"/>
</dbReference>
<dbReference type="Pfam" id="PF22042">
    <property type="entry name" value="EF-G_D2"/>
    <property type="match status" value="1"/>
</dbReference>
<dbReference type="Pfam" id="PF00679">
    <property type="entry name" value="EFG_C"/>
    <property type="match status" value="1"/>
</dbReference>
<dbReference type="Pfam" id="PF14492">
    <property type="entry name" value="EFG_III"/>
    <property type="match status" value="1"/>
</dbReference>
<dbReference type="Pfam" id="PF03764">
    <property type="entry name" value="EFG_IV"/>
    <property type="match status" value="1"/>
</dbReference>
<dbReference type="Pfam" id="PF00009">
    <property type="entry name" value="GTP_EFTU"/>
    <property type="match status" value="1"/>
</dbReference>
<dbReference type="PRINTS" id="PR00315">
    <property type="entry name" value="ELONGATNFCT"/>
</dbReference>
<dbReference type="PRINTS" id="PR01037">
    <property type="entry name" value="TCRTETOQM"/>
</dbReference>
<dbReference type="SMART" id="SM00838">
    <property type="entry name" value="EFG_C"/>
    <property type="match status" value="1"/>
</dbReference>
<dbReference type="SMART" id="SM00889">
    <property type="entry name" value="EFG_IV"/>
    <property type="match status" value="1"/>
</dbReference>
<dbReference type="SUPFAM" id="SSF54980">
    <property type="entry name" value="EF-G C-terminal domain-like"/>
    <property type="match status" value="2"/>
</dbReference>
<dbReference type="SUPFAM" id="SSF52540">
    <property type="entry name" value="P-loop containing nucleoside triphosphate hydrolases"/>
    <property type="match status" value="1"/>
</dbReference>
<dbReference type="SUPFAM" id="SSF54211">
    <property type="entry name" value="Ribosomal protein S5 domain 2-like"/>
    <property type="match status" value="1"/>
</dbReference>
<dbReference type="SUPFAM" id="SSF50447">
    <property type="entry name" value="Translation proteins"/>
    <property type="match status" value="1"/>
</dbReference>
<dbReference type="PROSITE" id="PS00301">
    <property type="entry name" value="G_TR_1"/>
    <property type="match status" value="1"/>
</dbReference>
<dbReference type="PROSITE" id="PS51722">
    <property type="entry name" value="G_TR_2"/>
    <property type="match status" value="1"/>
</dbReference>
<organism>
    <name type="scientific">Campylobacter coli</name>
    <dbReference type="NCBI Taxonomy" id="195"/>
    <lineage>
        <taxon>Bacteria</taxon>
        <taxon>Pseudomonadati</taxon>
        <taxon>Campylobacterota</taxon>
        <taxon>Epsilonproteobacteria</taxon>
        <taxon>Campylobacterales</taxon>
        <taxon>Campylobacteraceae</taxon>
        <taxon>Campylobacter</taxon>
    </lineage>
</organism>
<keyword id="KW-0046">Antibiotic resistance</keyword>
<keyword id="KW-0342">GTP-binding</keyword>
<keyword id="KW-0547">Nucleotide-binding</keyword>
<keyword id="KW-0648">Protein biosynthesis</keyword>
<accession>P23835</accession>
<protein>
    <recommendedName>
        <fullName>Tetracycline resistance protein TetO</fullName>
        <shortName>Tet(O)</shortName>
    </recommendedName>
</protein>
<evidence type="ECO:0000250" key="1"/>
<evidence type="ECO:0000255" key="2">
    <source>
        <dbReference type="PROSITE-ProRule" id="PRU01059"/>
    </source>
</evidence>
<name>TETO_CAMCO</name>
<proteinExistence type="inferred from homology"/>
<feature type="chain" id="PRO_0000091504" description="Tetracycline resistance protein TetO">
    <location>
        <begin position="1"/>
        <end position="639"/>
    </location>
</feature>
<feature type="domain" description="tr-type G" evidence="2">
    <location>
        <begin position="1"/>
        <end position="244"/>
    </location>
</feature>
<feature type="binding site" evidence="1">
    <location>
        <begin position="10"/>
        <end position="17"/>
    </location>
    <ligand>
        <name>GTP</name>
        <dbReference type="ChEBI" id="CHEBI:37565"/>
    </ligand>
</feature>
<feature type="binding site" evidence="1">
    <location>
        <begin position="74"/>
        <end position="78"/>
    </location>
    <ligand>
        <name>GTP</name>
        <dbReference type="ChEBI" id="CHEBI:37565"/>
    </ligand>
</feature>
<feature type="binding site" evidence="1">
    <location>
        <begin position="128"/>
        <end position="131"/>
    </location>
    <ligand>
        <name>GTP</name>
        <dbReference type="ChEBI" id="CHEBI:37565"/>
    </ligand>
</feature>